<proteinExistence type="inferred from homology"/>
<sequence>MKALIILGLVLLSVTVQGKIFERCELARTLKKLGLDGYKGVSLANWVCLAKWESGYNTEATNYNPGDESTDYGIFQINSRYWCNNGKTPGAVDACHISCSALLQNNIADAVACAKRVVSDPQGIRAWVAWRNHCQNRDVSQYVKGCGV</sequence>
<organism>
    <name type="scientific">Nasalis larvatus</name>
    <name type="common">Proboscis monkey</name>
    <dbReference type="NCBI Taxonomy" id="43780"/>
    <lineage>
        <taxon>Eukaryota</taxon>
        <taxon>Metazoa</taxon>
        <taxon>Chordata</taxon>
        <taxon>Craniata</taxon>
        <taxon>Vertebrata</taxon>
        <taxon>Euteleostomi</taxon>
        <taxon>Mammalia</taxon>
        <taxon>Eutheria</taxon>
        <taxon>Euarchontoglires</taxon>
        <taxon>Primates</taxon>
        <taxon>Haplorrhini</taxon>
        <taxon>Catarrhini</taxon>
        <taxon>Cercopithecidae</taxon>
        <taxon>Colobinae</taxon>
        <taxon>Nasalis</taxon>
    </lineage>
</organism>
<reference key="1">
    <citation type="journal article" date="1997" name="Nature">
        <title>Episodic adaptive evolution of primate lysozymes.</title>
        <authorList>
            <person name="Messier W."/>
            <person name="Stewart C.B."/>
        </authorList>
    </citation>
    <scope>NUCLEOTIDE SEQUENCE [GENOMIC DNA]</scope>
    <source>
        <tissue>Blood</tissue>
    </source>
</reference>
<comment type="function">
    <text>Lysozymes have primarily a bacteriolytic function; those in tissues and body fluids are associated with the monocyte-macrophage system and enhance the activity of immunoagents.</text>
</comment>
<comment type="catalytic activity">
    <reaction>
        <text>Hydrolysis of (1-&gt;4)-beta-linkages between N-acetylmuramic acid and N-acetyl-D-glucosamine residues in a peptidoglycan and between N-acetyl-D-glucosamine residues in chitodextrins.</text>
        <dbReference type="EC" id="3.2.1.17"/>
    </reaction>
</comment>
<comment type="subunit">
    <text>Monomer.</text>
</comment>
<comment type="subcellular location">
    <subcellularLocation>
        <location evidence="1">Secreted</location>
    </subcellularLocation>
</comment>
<comment type="miscellaneous">
    <text>Lysozyme C is capable of both hydrolysis and transglycosylation; it also shows a slight esterase activity. It acts rapidly on both peptide-substituted and unsubstituted peptidoglycan, and slowly on chitin oligosaccharides.</text>
</comment>
<comment type="similarity">
    <text evidence="2">Belongs to the glycosyl hydrolase 22 family.</text>
</comment>
<feature type="signal peptide" evidence="1">
    <location>
        <begin position="1"/>
        <end position="18"/>
    </location>
</feature>
<feature type="chain" id="PRO_0000018474" description="Lysozyme C">
    <location>
        <begin position="19"/>
        <end position="148"/>
    </location>
</feature>
<feature type="domain" description="C-type lysozyme" evidence="2">
    <location>
        <begin position="19"/>
        <end position="148"/>
    </location>
</feature>
<feature type="active site" evidence="2">
    <location>
        <position position="53"/>
    </location>
</feature>
<feature type="active site" evidence="2">
    <location>
        <position position="71"/>
    </location>
</feature>
<feature type="disulfide bond" evidence="2">
    <location>
        <begin position="24"/>
        <end position="146"/>
    </location>
</feature>
<feature type="disulfide bond" evidence="2">
    <location>
        <begin position="48"/>
        <end position="134"/>
    </location>
</feature>
<feature type="disulfide bond" evidence="2">
    <location>
        <begin position="83"/>
        <end position="99"/>
    </location>
</feature>
<feature type="disulfide bond" evidence="2">
    <location>
        <begin position="95"/>
        <end position="113"/>
    </location>
</feature>
<keyword id="KW-0929">Antimicrobial</keyword>
<keyword id="KW-0081">Bacteriolytic enzyme</keyword>
<keyword id="KW-1015">Disulfide bond</keyword>
<keyword id="KW-0326">Glycosidase</keyword>
<keyword id="KW-0378">Hydrolase</keyword>
<keyword id="KW-0964">Secreted</keyword>
<keyword id="KW-0732">Signal</keyword>
<name>LYSC_NASLA</name>
<protein>
    <recommendedName>
        <fullName>Lysozyme C</fullName>
        <ecNumber>3.2.1.17</ecNumber>
    </recommendedName>
    <alternativeName>
        <fullName>1,4-beta-N-acetylmuramidase C</fullName>
    </alternativeName>
</protein>
<evidence type="ECO:0000250" key="1"/>
<evidence type="ECO:0000255" key="2">
    <source>
        <dbReference type="PROSITE-ProRule" id="PRU00680"/>
    </source>
</evidence>
<accession>P79811</accession>
<gene>
    <name type="primary">LYZ</name>
    <name type="synonym">LZM</name>
</gene>
<dbReference type="EC" id="3.2.1.17"/>
<dbReference type="EMBL" id="U76948">
    <property type="protein sequence ID" value="AAB41218.1"/>
    <property type="molecule type" value="Genomic_DNA"/>
</dbReference>
<dbReference type="EMBL" id="U76945">
    <property type="protein sequence ID" value="AAB41218.1"/>
    <property type="status" value="JOINED"/>
    <property type="molecule type" value="Genomic_DNA"/>
</dbReference>
<dbReference type="EMBL" id="U76946">
    <property type="protein sequence ID" value="AAB41218.1"/>
    <property type="status" value="JOINED"/>
    <property type="molecule type" value="Genomic_DNA"/>
</dbReference>
<dbReference type="EMBL" id="U76947">
    <property type="protein sequence ID" value="AAB41218.1"/>
    <property type="status" value="JOINED"/>
    <property type="molecule type" value="Genomic_DNA"/>
</dbReference>
<dbReference type="SMR" id="P79811"/>
<dbReference type="CAZy" id="GH22">
    <property type="family name" value="Glycoside Hydrolase Family 22"/>
</dbReference>
<dbReference type="GO" id="GO:0005576">
    <property type="term" value="C:extracellular region"/>
    <property type="evidence" value="ECO:0007669"/>
    <property type="project" value="UniProtKB-SubCell"/>
</dbReference>
<dbReference type="GO" id="GO:0003796">
    <property type="term" value="F:lysozyme activity"/>
    <property type="evidence" value="ECO:0007669"/>
    <property type="project" value="UniProtKB-EC"/>
</dbReference>
<dbReference type="GO" id="GO:0050829">
    <property type="term" value="P:defense response to Gram-negative bacterium"/>
    <property type="evidence" value="ECO:0007669"/>
    <property type="project" value="TreeGrafter"/>
</dbReference>
<dbReference type="GO" id="GO:0050830">
    <property type="term" value="P:defense response to Gram-positive bacterium"/>
    <property type="evidence" value="ECO:0007669"/>
    <property type="project" value="TreeGrafter"/>
</dbReference>
<dbReference type="GO" id="GO:0031640">
    <property type="term" value="P:killing of cells of another organism"/>
    <property type="evidence" value="ECO:0007669"/>
    <property type="project" value="UniProtKB-KW"/>
</dbReference>
<dbReference type="CDD" id="cd16897">
    <property type="entry name" value="LYZ_C"/>
    <property type="match status" value="1"/>
</dbReference>
<dbReference type="FunFam" id="1.10.530.10:FF:000001">
    <property type="entry name" value="Lysozyme C"/>
    <property type="match status" value="1"/>
</dbReference>
<dbReference type="Gene3D" id="1.10.530.10">
    <property type="match status" value="1"/>
</dbReference>
<dbReference type="InterPro" id="IPR001916">
    <property type="entry name" value="Glyco_hydro_22"/>
</dbReference>
<dbReference type="InterPro" id="IPR019799">
    <property type="entry name" value="Glyco_hydro_22_CS"/>
</dbReference>
<dbReference type="InterPro" id="IPR000974">
    <property type="entry name" value="Glyco_hydro_22_lys"/>
</dbReference>
<dbReference type="InterPro" id="IPR023346">
    <property type="entry name" value="Lysozyme-like_dom_sf"/>
</dbReference>
<dbReference type="PANTHER" id="PTHR11407">
    <property type="entry name" value="LYSOZYME C"/>
    <property type="match status" value="1"/>
</dbReference>
<dbReference type="PANTHER" id="PTHR11407:SF28">
    <property type="entry name" value="LYSOZYME C"/>
    <property type="match status" value="1"/>
</dbReference>
<dbReference type="Pfam" id="PF00062">
    <property type="entry name" value="Lys"/>
    <property type="match status" value="1"/>
</dbReference>
<dbReference type="PRINTS" id="PR00137">
    <property type="entry name" value="LYSOZYME"/>
</dbReference>
<dbReference type="PRINTS" id="PR00135">
    <property type="entry name" value="LYZLACT"/>
</dbReference>
<dbReference type="SMART" id="SM00263">
    <property type="entry name" value="LYZ1"/>
    <property type="match status" value="1"/>
</dbReference>
<dbReference type="SUPFAM" id="SSF53955">
    <property type="entry name" value="Lysozyme-like"/>
    <property type="match status" value="1"/>
</dbReference>
<dbReference type="PROSITE" id="PS00128">
    <property type="entry name" value="GLYCOSYL_HYDROL_F22_1"/>
    <property type="match status" value="1"/>
</dbReference>
<dbReference type="PROSITE" id="PS51348">
    <property type="entry name" value="GLYCOSYL_HYDROL_F22_2"/>
    <property type="match status" value="1"/>
</dbReference>